<dbReference type="EMBL" id="FM209186">
    <property type="protein sequence ID" value="CAW30032.1"/>
    <property type="molecule type" value="Genomic_DNA"/>
</dbReference>
<dbReference type="RefSeq" id="WP_003095528.1">
    <property type="nucleotide sequence ID" value="NC_011770.1"/>
</dbReference>
<dbReference type="SMR" id="B7V1V5"/>
<dbReference type="KEGG" id="pag:PLES_52781"/>
<dbReference type="HOGENOM" id="CLU_049215_2_1_6"/>
<dbReference type="GO" id="GO:0005737">
    <property type="term" value="C:cytoplasm"/>
    <property type="evidence" value="ECO:0007669"/>
    <property type="project" value="UniProtKB-SubCell"/>
</dbReference>
<dbReference type="GO" id="GO:0016151">
    <property type="term" value="F:nickel cation binding"/>
    <property type="evidence" value="ECO:0007669"/>
    <property type="project" value="UniProtKB-UniRule"/>
</dbReference>
<dbReference type="Gene3D" id="1.10.4190.10">
    <property type="entry name" value="Urease accessory protein UreF"/>
    <property type="match status" value="1"/>
</dbReference>
<dbReference type="HAMAP" id="MF_01385">
    <property type="entry name" value="UreF"/>
    <property type="match status" value="1"/>
</dbReference>
<dbReference type="InterPro" id="IPR002639">
    <property type="entry name" value="UreF"/>
</dbReference>
<dbReference type="InterPro" id="IPR038277">
    <property type="entry name" value="UreF_sf"/>
</dbReference>
<dbReference type="PANTHER" id="PTHR33620">
    <property type="entry name" value="UREASE ACCESSORY PROTEIN F"/>
    <property type="match status" value="1"/>
</dbReference>
<dbReference type="PANTHER" id="PTHR33620:SF1">
    <property type="entry name" value="UREASE ACCESSORY PROTEIN F"/>
    <property type="match status" value="1"/>
</dbReference>
<dbReference type="Pfam" id="PF01730">
    <property type="entry name" value="UreF"/>
    <property type="match status" value="1"/>
</dbReference>
<dbReference type="PIRSF" id="PIRSF009467">
    <property type="entry name" value="Ureas_acces_UreF"/>
    <property type="match status" value="1"/>
</dbReference>
<reference key="1">
    <citation type="journal article" date="2009" name="Genome Res.">
        <title>Newly introduced genomic prophage islands are critical determinants of in vivo competitiveness in the Liverpool epidemic strain of Pseudomonas aeruginosa.</title>
        <authorList>
            <person name="Winstanley C."/>
            <person name="Langille M.G.I."/>
            <person name="Fothergill J.L."/>
            <person name="Kukavica-Ibrulj I."/>
            <person name="Paradis-Bleau C."/>
            <person name="Sanschagrin F."/>
            <person name="Thomson N.R."/>
            <person name="Winsor G.L."/>
            <person name="Quail M.A."/>
            <person name="Lennard N."/>
            <person name="Bignell A."/>
            <person name="Clarke L."/>
            <person name="Seeger K."/>
            <person name="Saunders D."/>
            <person name="Harris D."/>
            <person name="Parkhill J."/>
            <person name="Hancock R.E.W."/>
            <person name="Brinkman F.S.L."/>
            <person name="Levesque R.C."/>
        </authorList>
    </citation>
    <scope>NUCLEOTIDE SEQUENCE [LARGE SCALE GENOMIC DNA]</scope>
    <source>
        <strain>LESB58</strain>
    </source>
</reference>
<keyword id="KW-0143">Chaperone</keyword>
<keyword id="KW-0963">Cytoplasm</keyword>
<keyword id="KW-0996">Nickel insertion</keyword>
<proteinExistence type="inferred from homology"/>
<protein>
    <recommendedName>
        <fullName evidence="1">Urease accessory protein UreF</fullName>
    </recommendedName>
</protein>
<sequence>MNSIWARLRLASSQLPIGGYSYSQGLEAALDNGWVRDAESARTWLVDQLQLNLARFEAPLLAGLLRAALIGDWAACDAASERHRASRETRELAQESRQMGFSLHQLLEALPELDAPGRAWLARQDPPNLAAAWAMAARAWRLDAEEALSAWFWSWLENQLAVLMKTLPLGQLAAQKLASSLLPELDRACAEALRRPAVEGSAAFGLALASMTHETQYSRLFRS</sequence>
<evidence type="ECO:0000255" key="1">
    <source>
        <dbReference type="HAMAP-Rule" id="MF_01385"/>
    </source>
</evidence>
<accession>B7V1V5</accession>
<feature type="chain" id="PRO_1000145134" description="Urease accessory protein UreF">
    <location>
        <begin position="1"/>
        <end position="223"/>
    </location>
</feature>
<organism>
    <name type="scientific">Pseudomonas aeruginosa (strain LESB58)</name>
    <dbReference type="NCBI Taxonomy" id="557722"/>
    <lineage>
        <taxon>Bacteria</taxon>
        <taxon>Pseudomonadati</taxon>
        <taxon>Pseudomonadota</taxon>
        <taxon>Gammaproteobacteria</taxon>
        <taxon>Pseudomonadales</taxon>
        <taxon>Pseudomonadaceae</taxon>
        <taxon>Pseudomonas</taxon>
    </lineage>
</organism>
<comment type="function">
    <text evidence="1">Required for maturation of urease via the functional incorporation of the urease nickel metallocenter.</text>
</comment>
<comment type="subunit">
    <text evidence="1">UreD, UreF and UreG form a complex that acts as a GTP-hydrolysis-dependent molecular chaperone, activating the urease apoprotein by helping to assemble the nickel containing metallocenter of UreC. The UreE protein probably delivers the nickel.</text>
</comment>
<comment type="subcellular location">
    <subcellularLocation>
        <location evidence="1">Cytoplasm</location>
    </subcellularLocation>
</comment>
<comment type="similarity">
    <text evidence="1">Belongs to the UreF family.</text>
</comment>
<name>UREF_PSEA8</name>
<gene>
    <name evidence="1" type="primary">ureF</name>
    <name type="ordered locus">PLES_52781</name>
</gene>